<organism>
    <name type="scientific">Geobacillus thermodenitrificans (strain NG80-2)</name>
    <dbReference type="NCBI Taxonomy" id="420246"/>
    <lineage>
        <taxon>Bacteria</taxon>
        <taxon>Bacillati</taxon>
        <taxon>Bacillota</taxon>
        <taxon>Bacilli</taxon>
        <taxon>Bacillales</taxon>
        <taxon>Anoxybacillaceae</taxon>
        <taxon>Geobacillus</taxon>
    </lineage>
</organism>
<sequence>MKKNGILNKELNTLLASLGHTDTIVIADCGLPIPNEEARIDLALVKGFPPFLSVLDAVINELVVEEIVLAEEIKTQNPDVYESIKARMSDVPIQFVRHEEFKEMTKQAKAVIRTGEATPYANIILRSGVNFS</sequence>
<reference key="1">
    <citation type="journal article" date="2007" name="Proc. Natl. Acad. Sci. U.S.A.">
        <title>Genome and proteome of long-chain alkane degrading Geobacillus thermodenitrificans NG80-2 isolated from a deep-subsurface oil reservoir.</title>
        <authorList>
            <person name="Feng L."/>
            <person name="Wang W."/>
            <person name="Cheng J."/>
            <person name="Ren Y."/>
            <person name="Zhao G."/>
            <person name="Gao C."/>
            <person name="Tang Y."/>
            <person name="Liu X."/>
            <person name="Han W."/>
            <person name="Peng X."/>
            <person name="Liu R."/>
            <person name="Wang L."/>
        </authorList>
    </citation>
    <scope>NUCLEOTIDE SEQUENCE [LARGE SCALE GENOMIC DNA]</scope>
    <source>
        <strain>NG80-2</strain>
    </source>
</reference>
<feature type="chain" id="PRO_0000346207" description="D-ribose pyranase">
    <location>
        <begin position="1"/>
        <end position="132"/>
    </location>
</feature>
<feature type="active site" description="Proton donor" evidence="1">
    <location>
        <position position="20"/>
    </location>
</feature>
<feature type="binding site" evidence="1">
    <location>
        <position position="28"/>
    </location>
    <ligand>
        <name>substrate</name>
    </ligand>
</feature>
<feature type="binding site" evidence="1">
    <location>
        <position position="98"/>
    </location>
    <ligand>
        <name>substrate</name>
    </ligand>
</feature>
<feature type="binding site" evidence="1">
    <location>
        <begin position="120"/>
        <end position="122"/>
    </location>
    <ligand>
        <name>substrate</name>
    </ligand>
</feature>
<keyword id="KW-0119">Carbohydrate metabolism</keyword>
<keyword id="KW-0963">Cytoplasm</keyword>
<keyword id="KW-0413">Isomerase</keyword>
<comment type="function">
    <text evidence="1">Catalyzes the interconversion of beta-pyran and beta-furan forms of D-ribose.</text>
</comment>
<comment type="catalytic activity">
    <reaction evidence="1">
        <text>beta-D-ribopyranose = beta-D-ribofuranose</text>
        <dbReference type="Rhea" id="RHEA:25432"/>
        <dbReference type="ChEBI" id="CHEBI:27476"/>
        <dbReference type="ChEBI" id="CHEBI:47002"/>
        <dbReference type="EC" id="5.4.99.62"/>
    </reaction>
</comment>
<comment type="pathway">
    <text evidence="1">Carbohydrate metabolism; D-ribose degradation; D-ribose 5-phosphate from beta-D-ribopyranose: step 1/2.</text>
</comment>
<comment type="subunit">
    <text evidence="1">Homodecamer.</text>
</comment>
<comment type="subcellular location">
    <subcellularLocation>
        <location evidence="1">Cytoplasm</location>
    </subcellularLocation>
</comment>
<comment type="similarity">
    <text evidence="1">Belongs to the RbsD / FucU family. RbsD subfamily.</text>
</comment>
<name>RBSD_GEOTN</name>
<evidence type="ECO:0000255" key="1">
    <source>
        <dbReference type="HAMAP-Rule" id="MF_01661"/>
    </source>
</evidence>
<protein>
    <recommendedName>
        <fullName evidence="1">D-ribose pyranase</fullName>
        <ecNumber evidence="1">5.4.99.62</ecNumber>
    </recommendedName>
</protein>
<proteinExistence type="inferred from homology"/>
<gene>
    <name evidence="1" type="primary">rbsD</name>
    <name type="ordered locus">GTNG_3173</name>
</gene>
<dbReference type="EC" id="5.4.99.62" evidence="1"/>
<dbReference type="EMBL" id="CP000557">
    <property type="protein sequence ID" value="ABO68518.1"/>
    <property type="molecule type" value="Genomic_DNA"/>
</dbReference>
<dbReference type="RefSeq" id="WP_008881319.1">
    <property type="nucleotide sequence ID" value="NC_009328.1"/>
</dbReference>
<dbReference type="SMR" id="A4IT64"/>
<dbReference type="GeneID" id="87622703"/>
<dbReference type="KEGG" id="gtn:GTNG_3173"/>
<dbReference type="eggNOG" id="COG1869">
    <property type="taxonomic scope" value="Bacteria"/>
</dbReference>
<dbReference type="HOGENOM" id="CLU_135498_0_0_9"/>
<dbReference type="UniPathway" id="UPA00916">
    <property type="reaction ID" value="UER00888"/>
</dbReference>
<dbReference type="Proteomes" id="UP000001578">
    <property type="component" value="Chromosome"/>
</dbReference>
<dbReference type="GO" id="GO:0005829">
    <property type="term" value="C:cytosol"/>
    <property type="evidence" value="ECO:0007669"/>
    <property type="project" value="TreeGrafter"/>
</dbReference>
<dbReference type="GO" id="GO:0062193">
    <property type="term" value="F:D-ribose pyranase activity"/>
    <property type="evidence" value="ECO:0007669"/>
    <property type="project" value="UniProtKB-EC"/>
</dbReference>
<dbReference type="GO" id="GO:0016872">
    <property type="term" value="F:intramolecular lyase activity"/>
    <property type="evidence" value="ECO:0007669"/>
    <property type="project" value="UniProtKB-UniRule"/>
</dbReference>
<dbReference type="GO" id="GO:0048029">
    <property type="term" value="F:monosaccharide binding"/>
    <property type="evidence" value="ECO:0007669"/>
    <property type="project" value="InterPro"/>
</dbReference>
<dbReference type="GO" id="GO:0019303">
    <property type="term" value="P:D-ribose catabolic process"/>
    <property type="evidence" value="ECO:0007669"/>
    <property type="project" value="UniProtKB-UniRule"/>
</dbReference>
<dbReference type="Gene3D" id="3.40.1650.10">
    <property type="entry name" value="RbsD-like domain"/>
    <property type="match status" value="1"/>
</dbReference>
<dbReference type="HAMAP" id="MF_01661">
    <property type="entry name" value="D_rib_pyranase"/>
    <property type="match status" value="1"/>
</dbReference>
<dbReference type="InterPro" id="IPR023064">
    <property type="entry name" value="D-ribose_pyranase"/>
</dbReference>
<dbReference type="InterPro" id="IPR023750">
    <property type="entry name" value="RbsD-like_sf"/>
</dbReference>
<dbReference type="InterPro" id="IPR007721">
    <property type="entry name" value="RbsD_FucU"/>
</dbReference>
<dbReference type="NCBIfam" id="NF008761">
    <property type="entry name" value="PRK11797.1"/>
    <property type="match status" value="1"/>
</dbReference>
<dbReference type="PANTHER" id="PTHR37831">
    <property type="entry name" value="D-RIBOSE PYRANASE"/>
    <property type="match status" value="1"/>
</dbReference>
<dbReference type="PANTHER" id="PTHR37831:SF1">
    <property type="entry name" value="D-RIBOSE PYRANASE"/>
    <property type="match status" value="1"/>
</dbReference>
<dbReference type="Pfam" id="PF05025">
    <property type="entry name" value="RbsD_FucU"/>
    <property type="match status" value="1"/>
</dbReference>
<dbReference type="SUPFAM" id="SSF102546">
    <property type="entry name" value="RbsD-like"/>
    <property type="match status" value="1"/>
</dbReference>
<accession>A4IT64</accession>